<gene>
    <name type="ordered locus">LEPBI_I2088</name>
</gene>
<dbReference type="EMBL" id="CP000786">
    <property type="protein sequence ID" value="ABZ98190.1"/>
    <property type="molecule type" value="Genomic_DNA"/>
</dbReference>
<dbReference type="RefSeq" id="WP_012389060.1">
    <property type="nucleotide sequence ID" value="NC_010602.1"/>
</dbReference>
<dbReference type="SMR" id="B0SSV0"/>
<dbReference type="STRING" id="456481.LEPBI_I2088"/>
<dbReference type="KEGG" id="lbi:LEPBI_I2088"/>
<dbReference type="HOGENOM" id="CLU_030805_9_3_12"/>
<dbReference type="OrthoDB" id="9801454at2"/>
<dbReference type="BioCyc" id="LBIF456481:LEPBI_RS10315-MONOMER"/>
<dbReference type="Proteomes" id="UP000001847">
    <property type="component" value="Chromosome I"/>
</dbReference>
<dbReference type="CDD" id="cd00885">
    <property type="entry name" value="cinA"/>
    <property type="match status" value="1"/>
</dbReference>
<dbReference type="Gene3D" id="3.90.950.20">
    <property type="entry name" value="CinA-like"/>
    <property type="match status" value="1"/>
</dbReference>
<dbReference type="Gene3D" id="3.40.980.10">
    <property type="entry name" value="MoaB/Mog-like domain"/>
    <property type="match status" value="1"/>
</dbReference>
<dbReference type="HAMAP" id="MF_00226_B">
    <property type="entry name" value="CinA_B"/>
    <property type="match status" value="1"/>
</dbReference>
<dbReference type="InterPro" id="IPR050101">
    <property type="entry name" value="CinA"/>
</dbReference>
<dbReference type="InterPro" id="IPR036653">
    <property type="entry name" value="CinA-like_C"/>
</dbReference>
<dbReference type="InterPro" id="IPR008136">
    <property type="entry name" value="CinA_C"/>
</dbReference>
<dbReference type="InterPro" id="IPR008135">
    <property type="entry name" value="Competence-induced_CinA"/>
</dbReference>
<dbReference type="InterPro" id="IPR036425">
    <property type="entry name" value="MoaB/Mog-like_dom_sf"/>
</dbReference>
<dbReference type="InterPro" id="IPR001453">
    <property type="entry name" value="MoaB/Mog_dom"/>
</dbReference>
<dbReference type="NCBIfam" id="TIGR00199">
    <property type="entry name" value="PncC_domain"/>
    <property type="match status" value="1"/>
</dbReference>
<dbReference type="PANTHER" id="PTHR13939">
    <property type="entry name" value="NICOTINAMIDE-NUCLEOTIDE AMIDOHYDROLASE PNCC"/>
    <property type="match status" value="1"/>
</dbReference>
<dbReference type="PANTHER" id="PTHR13939:SF0">
    <property type="entry name" value="NMN AMIDOHYDROLASE-LIKE PROTEIN YFAY"/>
    <property type="match status" value="1"/>
</dbReference>
<dbReference type="Pfam" id="PF02464">
    <property type="entry name" value="CinA"/>
    <property type="match status" value="1"/>
</dbReference>
<dbReference type="Pfam" id="PF00994">
    <property type="entry name" value="MoCF_biosynth"/>
    <property type="match status" value="1"/>
</dbReference>
<dbReference type="PIRSF" id="PIRSF006728">
    <property type="entry name" value="CinA"/>
    <property type="match status" value="1"/>
</dbReference>
<dbReference type="SMART" id="SM00852">
    <property type="entry name" value="MoCF_biosynth"/>
    <property type="match status" value="1"/>
</dbReference>
<dbReference type="SUPFAM" id="SSF142433">
    <property type="entry name" value="CinA-like"/>
    <property type="match status" value="1"/>
</dbReference>
<dbReference type="SUPFAM" id="SSF53218">
    <property type="entry name" value="Molybdenum cofactor biosynthesis proteins"/>
    <property type="match status" value="1"/>
</dbReference>
<reference key="1">
    <citation type="journal article" date="2008" name="PLoS ONE">
        <title>Genome sequence of the saprophyte Leptospira biflexa provides insights into the evolution of Leptospira and the pathogenesis of leptospirosis.</title>
        <authorList>
            <person name="Picardeau M."/>
            <person name="Bulach D.M."/>
            <person name="Bouchier C."/>
            <person name="Zuerner R.L."/>
            <person name="Zidane N."/>
            <person name="Wilson P.J."/>
            <person name="Creno S."/>
            <person name="Kuczek E.S."/>
            <person name="Bommezzadri S."/>
            <person name="Davis J.C."/>
            <person name="McGrath A."/>
            <person name="Johnson M.J."/>
            <person name="Boursaux-Eude C."/>
            <person name="Seemann T."/>
            <person name="Rouy Z."/>
            <person name="Coppel R.L."/>
            <person name="Rood J.I."/>
            <person name="Lajus A."/>
            <person name="Davies J.K."/>
            <person name="Medigue C."/>
            <person name="Adler B."/>
        </authorList>
    </citation>
    <scope>NUCLEOTIDE SEQUENCE [LARGE SCALE GENOMIC DNA]</scope>
    <source>
        <strain>Patoc 1 / ATCC 23582 / Paris</strain>
    </source>
</reference>
<proteinExistence type="inferred from homology"/>
<feature type="chain" id="PRO_1000100326" description="CinA-like protein">
    <location>
        <begin position="1"/>
        <end position="417"/>
    </location>
</feature>
<organism>
    <name type="scientific">Leptospira biflexa serovar Patoc (strain Patoc 1 / ATCC 23582 / Paris)</name>
    <dbReference type="NCBI Taxonomy" id="456481"/>
    <lineage>
        <taxon>Bacteria</taxon>
        <taxon>Pseudomonadati</taxon>
        <taxon>Spirochaetota</taxon>
        <taxon>Spirochaetia</taxon>
        <taxon>Leptospirales</taxon>
        <taxon>Leptospiraceae</taxon>
        <taxon>Leptospira</taxon>
    </lineage>
</organism>
<protein>
    <recommendedName>
        <fullName evidence="1">CinA-like protein</fullName>
    </recommendedName>
</protein>
<accession>B0SSV0</accession>
<sequence>MTPYIVILSTGSELTAGRSVDTNSGWIANQLFELGWKVKKIITLPDDPNLIFKELEALQSLAKEIPVLAIMTGGLGPTEDDYTLETVLKLTGKTSYAVEKAKIRLTKIYEARGKDYKDILPTVFRQTNVPEGCKTLDNSVGIAVGFIESLGENSYLVCMPGVPSEMTEMFKRRLVPELKKMYPRENLIQKTKWLWNIGESLFQNEFIEPNREVYFKETEWGVTANRGYIKCIFQSTNDVMLDTILKSLEKQYPDLISDDVFQYVHEQLLYEKWTISVVESCTGGLLGKKLTERAGSSAYFMGGFLTYSNEMKSNLLGIPKETIETFGAVSDEVAFAMVDGLCLKTGTDFGVSITGIAGPEGGSEEKPVGTVCIGLKEPNGKIKVHRYLFPGNRESIRENASNTALFLIYQSLKGKVV</sequence>
<keyword id="KW-1185">Reference proteome</keyword>
<name>CINAL_LEPBP</name>
<evidence type="ECO:0000255" key="1">
    <source>
        <dbReference type="HAMAP-Rule" id="MF_00226"/>
    </source>
</evidence>
<comment type="similarity">
    <text evidence="1">Belongs to the CinA family.</text>
</comment>